<evidence type="ECO:0000250" key="1"/>
<evidence type="ECO:0000250" key="2">
    <source>
        <dbReference type="UniProtKB" id="Q969S8"/>
    </source>
</evidence>
<evidence type="ECO:0000269" key="3">
    <source>
    </source>
</evidence>
<evidence type="ECO:0000305" key="4"/>
<proteinExistence type="evidence at transcript level"/>
<sequence>MGTALVYHEDMTATRLLWDDPECEIECPERLTAALDGLRQRGLEERCLCLSACEASEEELGLVHSPEYIALVQKTQTLDKEELHALSKQYNAVYFHPDTFHCARLAAGAALQLVDAVLTGAVHNGLALVRPPGHHSQRAAANGFCVFNNVALAAKHAKQKYGLQRILIVDWDVHHGQGIQYIFNDDPSVLYFSWHRYEHGSFWPFLPESDADAVGQGQGQGFTVNLPWNQVGMGNADYLAAFLHVLLPLAFEFDPELVLVSAGFDSAIGDPEGQMQATPECFAHLTQLLQVLAGGRICAVLEGGYHLESLAQSVCMMVQTLLGDPTPPLLGLMVPCQSALESIQSVQTAQTPYWTSLQQNVAPVLSSSTHSPEERSLRLLGESPTCAVAEDSLSPLLDQLCLRPAPPICTAVASTVPGAALCLPPGVLHQEGSVLREETEAWARLHKSRFQDEDLATLGKILCLLDGIMDGQIRNAIATTTALATAATLDVLIQRCLARRAQRVLCVALGQLDRPLDLADDGRILWLNIRGKDAAIQSMFHFSTPLPQTTGGFLSLILGLVLPLAYGFQPDMVLMALGPAHGLQNAQAALLAAMLRSPVGGRILAVVEEESIRLLARSLAQALHGETPPSLGPFSKATPEEIQALMFLKARLEARWKLLQVAAPPP</sequence>
<organism>
    <name type="scientific">Mus musculus</name>
    <name type="common">Mouse</name>
    <dbReference type="NCBI Taxonomy" id="10090"/>
    <lineage>
        <taxon>Eukaryota</taxon>
        <taxon>Metazoa</taxon>
        <taxon>Chordata</taxon>
        <taxon>Craniata</taxon>
        <taxon>Vertebrata</taxon>
        <taxon>Euteleostomi</taxon>
        <taxon>Mammalia</taxon>
        <taxon>Eutheria</taxon>
        <taxon>Euarchontoglires</taxon>
        <taxon>Glires</taxon>
        <taxon>Rodentia</taxon>
        <taxon>Myomorpha</taxon>
        <taxon>Muroidea</taxon>
        <taxon>Muridae</taxon>
        <taxon>Murinae</taxon>
        <taxon>Mus</taxon>
        <taxon>Mus</taxon>
    </lineage>
</organism>
<comment type="function">
    <text evidence="2">Polyamine deacetylase (PDAC), which acts preferentially on N(8)-acetylspermidine, and also on acetylcadaverine and acetylputrescine. Exhibits attenuated catalytic activity toward N(1),N(8)-diacetylspermidine and very low activity, if any, toward N(1)-acetylspermidine. Histone deacetylase activity has been observed in vitro. Has also been shown to be involved in MSH2 deacetylation. The physiological relevance of protein/histone deacetylase activity is unclear and could be very weak. May play a role in the promotion of late stages of autophagy, possibly autophagosome-lysosome fusion and/or lysosomal exocytosis in neuroblastoma cells. May play a role in homologous recombination. May promote DNA mismatch repair.</text>
</comment>
<comment type="catalytic activity">
    <reaction evidence="2">
        <text>N(8)-acetylspermidine + H2O = spermidine + acetate</text>
        <dbReference type="Rhea" id="RHEA:23928"/>
        <dbReference type="ChEBI" id="CHEBI:15377"/>
        <dbReference type="ChEBI" id="CHEBI:30089"/>
        <dbReference type="ChEBI" id="CHEBI:57834"/>
        <dbReference type="ChEBI" id="CHEBI:58535"/>
        <dbReference type="EC" id="3.5.1.48"/>
    </reaction>
</comment>
<comment type="catalytic activity">
    <reaction evidence="2">
        <text>N-acetylputrescine + H2O = putrescine + acetate</text>
        <dbReference type="Rhea" id="RHEA:23412"/>
        <dbReference type="ChEBI" id="CHEBI:15377"/>
        <dbReference type="ChEBI" id="CHEBI:30089"/>
        <dbReference type="ChEBI" id="CHEBI:58263"/>
        <dbReference type="ChEBI" id="CHEBI:326268"/>
        <dbReference type="EC" id="3.5.1.62"/>
    </reaction>
</comment>
<comment type="catalytic activity">
    <reaction evidence="2">
        <text>N-acetylcadaverine + H2O = cadaverine + acetate</text>
        <dbReference type="Rhea" id="RHEA:51892"/>
        <dbReference type="ChEBI" id="CHEBI:15377"/>
        <dbReference type="ChEBI" id="CHEBI:30089"/>
        <dbReference type="ChEBI" id="CHEBI:58384"/>
        <dbReference type="ChEBI" id="CHEBI:134408"/>
    </reaction>
</comment>
<comment type="catalytic activity">
    <reaction evidence="2">
        <text>N(6)-acetyl-L-lysyl-[protein] + H2O = L-lysyl-[protein] + acetate</text>
        <dbReference type="Rhea" id="RHEA:58108"/>
        <dbReference type="Rhea" id="RHEA-COMP:9752"/>
        <dbReference type="Rhea" id="RHEA-COMP:10731"/>
        <dbReference type="ChEBI" id="CHEBI:15377"/>
        <dbReference type="ChEBI" id="CHEBI:29969"/>
        <dbReference type="ChEBI" id="CHEBI:30089"/>
        <dbReference type="ChEBI" id="CHEBI:61930"/>
    </reaction>
</comment>
<comment type="subunit">
    <text evidence="2">Interacts with HDAC3. Interacts with HDAC2 and NCOR2/SMRT. Interacts with HSPA8/HSC70. Interacts with MSH2.</text>
</comment>
<comment type="subcellular location">
    <subcellularLocation>
        <location evidence="2">Cytoplasm</location>
    </subcellularLocation>
    <subcellularLocation>
        <location evidence="2">Nucleus</location>
    </subcellularLocation>
    <text evidence="2">Excluded from nucleoli.</text>
</comment>
<comment type="tissue specificity">
    <text evidence="3">widely expressed.</text>
</comment>
<comment type="similarity">
    <text evidence="4">Belongs to the histone deacetylase family. HD type 2 subfamily.</text>
</comment>
<comment type="caution">
    <text evidence="2">Protein/histone deacetylase activity in vivo is uncertain. The 3D structure analysis of the zebrafish ortholog shows that a glutamate gatekeeper and a sterically constricted active site confer specificity for N(8)-acetylspermidine hydrolysis and disfavour acetyllysine hydrolysis. Supporting this observation, has been shown to exhibit only very low activity, if any, towards acetyl-lysine peptide substrates. However, histone deacetylase activity has been observed in vitro and HDAC10 has also been shown to be involved in MSH2 deacetylation.</text>
</comment>
<feature type="chain" id="PRO_0000114713" description="Polyamine deacetylase HDAC10">
    <location>
        <begin position="1"/>
        <end position="666"/>
    </location>
</feature>
<feature type="region of interest" description="Histone deacetylase">
    <location>
        <begin position="1"/>
        <end position="323"/>
    </location>
</feature>
<feature type="active site" evidence="1">
    <location>
        <position position="135"/>
    </location>
</feature>
<feature type="sequence conflict" description="In Ref. 3; AAH64018." evidence="4" ref="3">
    <original>N</original>
    <variation>D</variation>
    <location>
        <position position="91"/>
    </location>
</feature>
<keyword id="KW-0072">Autophagy</keyword>
<keyword id="KW-0963">Cytoplasm</keyword>
<keyword id="KW-0227">DNA damage</keyword>
<keyword id="KW-0233">DNA recombination</keyword>
<keyword id="KW-0234">DNA repair</keyword>
<keyword id="KW-0378">Hydrolase</keyword>
<keyword id="KW-0479">Metal-binding</keyword>
<keyword id="KW-0539">Nucleus</keyword>
<keyword id="KW-0597">Phosphoprotein</keyword>
<keyword id="KW-1185">Reference proteome</keyword>
<keyword id="KW-0862">Zinc</keyword>
<protein>
    <recommendedName>
        <fullName>Polyamine deacetylase HDAC10</fullName>
        <ecNumber evidence="2">3.5.1.48</ecNumber>
        <ecNumber evidence="2">3.5.1.62</ecNumber>
    </recommendedName>
    <alternativeName>
        <fullName>Histone deacetylase 10</fullName>
        <shortName>HD10</shortName>
    </alternativeName>
</protein>
<accession>Q6P3E7</accession>
<accession>G3X9I8</accession>
<name>HDA10_MOUSE</name>
<dbReference type="EC" id="3.5.1.48" evidence="2"/>
<dbReference type="EC" id="3.5.1.62" evidence="2"/>
<dbReference type="EMBL" id="AC113069">
    <property type="status" value="NOT_ANNOTATED_CDS"/>
    <property type="molecule type" value="Genomic_DNA"/>
</dbReference>
<dbReference type="EMBL" id="CH466550">
    <property type="protein sequence ID" value="EDL04375.1"/>
    <property type="molecule type" value="Genomic_DNA"/>
</dbReference>
<dbReference type="EMBL" id="BC064018">
    <property type="protein sequence ID" value="AAH64018.1"/>
    <property type="molecule type" value="mRNA"/>
</dbReference>
<dbReference type="CCDS" id="CCDS27739.1"/>
<dbReference type="RefSeq" id="NP_954668.2">
    <property type="nucleotide sequence ID" value="NM_199198.3"/>
</dbReference>
<dbReference type="SMR" id="Q6P3E7"/>
<dbReference type="BioGRID" id="228438">
    <property type="interactions" value="6"/>
</dbReference>
<dbReference type="FunCoup" id="Q6P3E7">
    <property type="interactions" value="2397"/>
</dbReference>
<dbReference type="IntAct" id="Q6P3E7">
    <property type="interactions" value="8"/>
</dbReference>
<dbReference type="STRING" id="10090.ENSMUSP00000080832"/>
<dbReference type="BindingDB" id="Q6P3E7"/>
<dbReference type="ChEMBL" id="CHEMBL3832944"/>
<dbReference type="GlyGen" id="Q6P3E7">
    <property type="glycosylation" value="1 site"/>
</dbReference>
<dbReference type="PhosphoSitePlus" id="Q6P3E7"/>
<dbReference type="PaxDb" id="10090-ENSMUSP00000080832"/>
<dbReference type="ProteomicsDB" id="271497"/>
<dbReference type="Pumba" id="Q6P3E7"/>
<dbReference type="Antibodypedia" id="14233">
    <property type="antibodies" value="523 antibodies from 37 providers"/>
</dbReference>
<dbReference type="DNASU" id="170787"/>
<dbReference type="Ensembl" id="ENSMUST00000082197.12">
    <property type="protein sequence ID" value="ENSMUSP00000080832.6"/>
    <property type="gene ID" value="ENSMUSG00000062906.13"/>
</dbReference>
<dbReference type="GeneID" id="170787"/>
<dbReference type="KEGG" id="mmu:170787"/>
<dbReference type="UCSC" id="uc007xfj.2">
    <property type="organism name" value="mouse"/>
</dbReference>
<dbReference type="AGR" id="MGI:2158340"/>
<dbReference type="CTD" id="83933"/>
<dbReference type="MGI" id="MGI:2158340">
    <property type="gene designation" value="Hdac10"/>
</dbReference>
<dbReference type="VEuPathDB" id="HostDB:ENSMUSG00000062906"/>
<dbReference type="eggNOG" id="KOG1343">
    <property type="taxonomic scope" value="Eukaryota"/>
</dbReference>
<dbReference type="GeneTree" id="ENSGT00940000160061"/>
<dbReference type="InParanoid" id="Q6P3E7"/>
<dbReference type="OMA" id="MAMMCVV"/>
<dbReference type="OrthoDB" id="424012at2759"/>
<dbReference type="PhylomeDB" id="Q6P3E7"/>
<dbReference type="TreeFam" id="TF106173"/>
<dbReference type="Reactome" id="R-MMU-3214815">
    <property type="pathway name" value="HDACs deacetylate histones"/>
</dbReference>
<dbReference type="Reactome" id="R-MMU-350054">
    <property type="pathway name" value="Notch-HLH transcription pathway"/>
</dbReference>
<dbReference type="BioGRID-ORCS" id="170787">
    <property type="hits" value="2 hits in 81 CRISPR screens"/>
</dbReference>
<dbReference type="ChiTaRS" id="Hdac10">
    <property type="organism name" value="mouse"/>
</dbReference>
<dbReference type="PRO" id="PR:Q6P3E7"/>
<dbReference type="Proteomes" id="UP000000589">
    <property type="component" value="Chromosome 15"/>
</dbReference>
<dbReference type="RNAct" id="Q6P3E7">
    <property type="molecule type" value="protein"/>
</dbReference>
<dbReference type="Bgee" id="ENSMUSG00000062906">
    <property type="expression patterns" value="Expressed in cortical plate and 160 other cell types or tissues"/>
</dbReference>
<dbReference type="ExpressionAtlas" id="Q6P3E7">
    <property type="expression patterns" value="baseline and differential"/>
</dbReference>
<dbReference type="GO" id="GO:0005829">
    <property type="term" value="C:cytosol"/>
    <property type="evidence" value="ECO:0007669"/>
    <property type="project" value="Ensembl"/>
</dbReference>
<dbReference type="GO" id="GO:0000118">
    <property type="term" value="C:histone deacetylase complex"/>
    <property type="evidence" value="ECO:0000266"/>
    <property type="project" value="MGI"/>
</dbReference>
<dbReference type="GO" id="GO:0047609">
    <property type="term" value="F:acetylputrescine deacetylase activity"/>
    <property type="evidence" value="ECO:0007669"/>
    <property type="project" value="UniProtKB-EC"/>
</dbReference>
<dbReference type="GO" id="GO:0047611">
    <property type="term" value="F:acetylspermidine deacetylase activity"/>
    <property type="evidence" value="ECO:0007669"/>
    <property type="project" value="UniProtKB-EC"/>
</dbReference>
<dbReference type="GO" id="GO:0019213">
    <property type="term" value="F:deacetylase activity"/>
    <property type="evidence" value="ECO:0000250"/>
    <property type="project" value="UniProtKB"/>
</dbReference>
<dbReference type="GO" id="GO:0004407">
    <property type="term" value="F:histone deacetylase activity"/>
    <property type="evidence" value="ECO:0000266"/>
    <property type="project" value="MGI"/>
</dbReference>
<dbReference type="GO" id="GO:0042826">
    <property type="term" value="F:histone deacetylase binding"/>
    <property type="evidence" value="ECO:0007669"/>
    <property type="project" value="Ensembl"/>
</dbReference>
<dbReference type="GO" id="GO:0008270">
    <property type="term" value="F:zinc ion binding"/>
    <property type="evidence" value="ECO:0000250"/>
    <property type="project" value="UniProtKB"/>
</dbReference>
<dbReference type="GO" id="GO:0006281">
    <property type="term" value="P:DNA repair"/>
    <property type="evidence" value="ECO:0007669"/>
    <property type="project" value="UniProtKB-KW"/>
</dbReference>
<dbReference type="GO" id="GO:0035825">
    <property type="term" value="P:homologous recombination"/>
    <property type="evidence" value="ECO:0000250"/>
    <property type="project" value="UniProtKB"/>
</dbReference>
<dbReference type="GO" id="GO:0016236">
    <property type="term" value="P:macroautophagy"/>
    <property type="evidence" value="ECO:0000250"/>
    <property type="project" value="UniProtKB"/>
</dbReference>
<dbReference type="GO" id="GO:0000122">
    <property type="term" value="P:negative regulation of transcription by RNA polymerase II"/>
    <property type="evidence" value="ECO:0007669"/>
    <property type="project" value="Ensembl"/>
</dbReference>
<dbReference type="GO" id="GO:0106047">
    <property type="term" value="P:polyamine deacetylation"/>
    <property type="evidence" value="ECO:0000250"/>
    <property type="project" value="UniProtKB"/>
</dbReference>
<dbReference type="GO" id="GO:0032425">
    <property type="term" value="P:positive regulation of mismatch repair"/>
    <property type="evidence" value="ECO:0000250"/>
    <property type="project" value="UniProtKB"/>
</dbReference>
<dbReference type="GO" id="GO:0106048">
    <property type="term" value="P:spermidine deacetylation"/>
    <property type="evidence" value="ECO:0000250"/>
    <property type="project" value="UniProtKB"/>
</dbReference>
<dbReference type="FunFam" id="3.40.800.20:FF:000005">
    <property type="entry name" value="histone deacetylase 6"/>
    <property type="match status" value="1"/>
</dbReference>
<dbReference type="Gene3D" id="3.40.800.20">
    <property type="entry name" value="Histone deacetylase domain"/>
    <property type="match status" value="1"/>
</dbReference>
<dbReference type="InterPro" id="IPR050284">
    <property type="entry name" value="HDAC_PDAC"/>
</dbReference>
<dbReference type="InterPro" id="IPR000286">
    <property type="entry name" value="His_deacetylse"/>
</dbReference>
<dbReference type="InterPro" id="IPR023801">
    <property type="entry name" value="His_deacetylse_dom"/>
</dbReference>
<dbReference type="InterPro" id="IPR037138">
    <property type="entry name" value="His_deacetylse_dom_sf"/>
</dbReference>
<dbReference type="InterPro" id="IPR023696">
    <property type="entry name" value="Ureohydrolase_dom_sf"/>
</dbReference>
<dbReference type="PANTHER" id="PTHR10625">
    <property type="entry name" value="HISTONE DEACETYLASE HDAC1-RELATED"/>
    <property type="match status" value="1"/>
</dbReference>
<dbReference type="PANTHER" id="PTHR10625:SF43">
    <property type="entry name" value="POLYAMINE DEACETYLASE HDAC10"/>
    <property type="match status" value="1"/>
</dbReference>
<dbReference type="Pfam" id="PF00850">
    <property type="entry name" value="Hist_deacetyl"/>
    <property type="match status" value="1"/>
</dbReference>
<dbReference type="PRINTS" id="PR01270">
    <property type="entry name" value="HDASUPER"/>
</dbReference>
<dbReference type="SUPFAM" id="SSF52768">
    <property type="entry name" value="Arginase/deacetylase"/>
    <property type="match status" value="2"/>
</dbReference>
<gene>
    <name type="primary">Hdac10</name>
</gene>
<reference key="1">
    <citation type="journal article" date="2009" name="PLoS Biol.">
        <title>Lineage-specific biology revealed by a finished genome assembly of the mouse.</title>
        <authorList>
            <person name="Church D.M."/>
            <person name="Goodstadt L."/>
            <person name="Hillier L.W."/>
            <person name="Zody M.C."/>
            <person name="Goldstein S."/>
            <person name="She X."/>
            <person name="Bult C.J."/>
            <person name="Agarwala R."/>
            <person name="Cherry J.L."/>
            <person name="DiCuccio M."/>
            <person name="Hlavina W."/>
            <person name="Kapustin Y."/>
            <person name="Meric P."/>
            <person name="Maglott D."/>
            <person name="Birtle Z."/>
            <person name="Marques A.C."/>
            <person name="Graves T."/>
            <person name="Zhou S."/>
            <person name="Teague B."/>
            <person name="Potamousis K."/>
            <person name="Churas C."/>
            <person name="Place M."/>
            <person name="Herschleb J."/>
            <person name="Runnheim R."/>
            <person name="Forrest D."/>
            <person name="Amos-Landgraf J."/>
            <person name="Schwartz D.C."/>
            <person name="Cheng Z."/>
            <person name="Lindblad-Toh K."/>
            <person name="Eichler E.E."/>
            <person name="Ponting C.P."/>
        </authorList>
    </citation>
    <scope>NUCLEOTIDE SEQUENCE [LARGE SCALE GENOMIC DNA]</scope>
    <source>
        <strain>C57BL/6J</strain>
    </source>
</reference>
<reference key="2">
    <citation type="submission" date="2005-07" db="EMBL/GenBank/DDBJ databases">
        <authorList>
            <person name="Mural R.J."/>
            <person name="Adams M.D."/>
            <person name="Myers E.W."/>
            <person name="Smith H.O."/>
            <person name="Venter J.C."/>
        </authorList>
    </citation>
    <scope>NUCLEOTIDE SEQUENCE [LARGE SCALE GENOMIC DNA]</scope>
</reference>
<reference key="3">
    <citation type="journal article" date="2004" name="Genome Res.">
        <title>The status, quality, and expansion of the NIH full-length cDNA project: the Mammalian Gene Collection (MGC).</title>
        <authorList>
            <consortium name="The MGC Project Team"/>
        </authorList>
    </citation>
    <scope>NUCLEOTIDE SEQUENCE [LARGE SCALE MRNA]</scope>
    <source>
        <strain>FVB/N</strain>
        <tissue>Mammary tumor</tissue>
    </source>
</reference>
<reference key="4">
    <citation type="journal article" date="2002" name="J. Biol. Chem.">
        <title>Isolation and characterization of mammalian HDAC10, a novel histone deacetylase.</title>
        <authorList>
            <person name="Kao H.-Y."/>
            <person name="Lee C.-H."/>
            <person name="Komarov A."/>
            <person name="Han C.C."/>
            <person name="Evans R.M."/>
        </authorList>
    </citation>
    <scope>TISSUE SPECIFICITY</scope>
    <source>
        <tissue>Hepatoma</tissue>
    </source>
</reference>